<proteinExistence type="inferred from homology"/>
<feature type="chain" id="PRO_1000119386" description="Phenylalanine--tRNA ligase alpha subunit">
    <location>
        <begin position="1"/>
        <end position="344"/>
    </location>
</feature>
<feature type="binding site" evidence="1">
    <location>
        <position position="256"/>
    </location>
    <ligand>
        <name>Mg(2+)</name>
        <dbReference type="ChEBI" id="CHEBI:18420"/>
        <note>shared with beta subunit</note>
    </ligand>
</feature>
<gene>
    <name evidence="1" type="primary">pheS</name>
    <name type="ordered locus">BCAH820_4675</name>
</gene>
<keyword id="KW-0030">Aminoacyl-tRNA synthetase</keyword>
<keyword id="KW-0067">ATP-binding</keyword>
<keyword id="KW-0963">Cytoplasm</keyword>
<keyword id="KW-0436">Ligase</keyword>
<keyword id="KW-0460">Magnesium</keyword>
<keyword id="KW-0479">Metal-binding</keyword>
<keyword id="KW-0547">Nucleotide-binding</keyword>
<keyword id="KW-0648">Protein biosynthesis</keyword>
<organism>
    <name type="scientific">Bacillus cereus (strain AH820)</name>
    <dbReference type="NCBI Taxonomy" id="405535"/>
    <lineage>
        <taxon>Bacteria</taxon>
        <taxon>Bacillati</taxon>
        <taxon>Bacillota</taxon>
        <taxon>Bacilli</taxon>
        <taxon>Bacillales</taxon>
        <taxon>Bacillaceae</taxon>
        <taxon>Bacillus</taxon>
        <taxon>Bacillus cereus group</taxon>
    </lineage>
</organism>
<name>SYFA_BACC0</name>
<reference key="1">
    <citation type="submission" date="2008-10" db="EMBL/GenBank/DDBJ databases">
        <title>Genome sequence of Bacillus cereus AH820.</title>
        <authorList>
            <person name="Dodson R.J."/>
            <person name="Durkin A.S."/>
            <person name="Rosovitz M.J."/>
            <person name="Rasko D.A."/>
            <person name="Hoffmaster A."/>
            <person name="Ravel J."/>
            <person name="Sutton G."/>
        </authorList>
    </citation>
    <scope>NUCLEOTIDE SEQUENCE [LARGE SCALE GENOMIC DNA]</scope>
    <source>
        <strain>AH820</strain>
    </source>
</reference>
<protein>
    <recommendedName>
        <fullName evidence="1">Phenylalanine--tRNA ligase alpha subunit</fullName>
        <ecNumber evidence="1">6.1.1.20</ecNumber>
    </recommendedName>
    <alternativeName>
        <fullName evidence="1">Phenylalanyl-tRNA synthetase alpha subunit</fullName>
        <shortName evidence="1">PheRS</shortName>
    </alternativeName>
</protein>
<evidence type="ECO:0000255" key="1">
    <source>
        <dbReference type="HAMAP-Rule" id="MF_00281"/>
    </source>
</evidence>
<sequence>MEARLKELKQKALELIEEAKELKGLNDVRVAYLGKKGPITEVLRGMGKLSAEERPRMGALVNEVREAIQTRLDDKISNLEKAVIEAKLATETIDVTLPGRPVETGCHHPLTAVVEQIEDVFIGMGYEVAEGTEVEKDYYNFEALNLPKDHPARDMQDTFYITEETLLRTHTSSVQARTMENNKEKGPIKIICPGKVYRRDDDDATHSHQFMQIEGLVIDKNIRMSDLKGTLQVFVKKMFGEDREIRLRPSFFPFTEPSVEMDISCMMCHGKGCGTCKGTGWIEILGAGMVHPNVLEMAGYDSKEYQGFAFGMGAERIAMLKYGVDDIRHFYTNDVRFLQQFKRA</sequence>
<accession>B7JR67</accession>
<comment type="catalytic activity">
    <reaction evidence="1">
        <text>tRNA(Phe) + L-phenylalanine + ATP = L-phenylalanyl-tRNA(Phe) + AMP + diphosphate + H(+)</text>
        <dbReference type="Rhea" id="RHEA:19413"/>
        <dbReference type="Rhea" id="RHEA-COMP:9668"/>
        <dbReference type="Rhea" id="RHEA-COMP:9699"/>
        <dbReference type="ChEBI" id="CHEBI:15378"/>
        <dbReference type="ChEBI" id="CHEBI:30616"/>
        <dbReference type="ChEBI" id="CHEBI:33019"/>
        <dbReference type="ChEBI" id="CHEBI:58095"/>
        <dbReference type="ChEBI" id="CHEBI:78442"/>
        <dbReference type="ChEBI" id="CHEBI:78531"/>
        <dbReference type="ChEBI" id="CHEBI:456215"/>
        <dbReference type="EC" id="6.1.1.20"/>
    </reaction>
</comment>
<comment type="cofactor">
    <cofactor evidence="1">
        <name>Mg(2+)</name>
        <dbReference type="ChEBI" id="CHEBI:18420"/>
    </cofactor>
    <text evidence="1">Binds 2 magnesium ions per tetramer.</text>
</comment>
<comment type="subunit">
    <text evidence="1">Tetramer of two alpha and two beta subunits.</text>
</comment>
<comment type="subcellular location">
    <subcellularLocation>
        <location evidence="1">Cytoplasm</location>
    </subcellularLocation>
</comment>
<comment type="similarity">
    <text evidence="1">Belongs to the class-II aminoacyl-tRNA synthetase family. Phe-tRNA synthetase alpha subunit type 1 subfamily.</text>
</comment>
<dbReference type="EC" id="6.1.1.20" evidence="1"/>
<dbReference type="EMBL" id="CP001283">
    <property type="protein sequence ID" value="ACK88252.1"/>
    <property type="molecule type" value="Genomic_DNA"/>
</dbReference>
<dbReference type="RefSeq" id="WP_000388219.1">
    <property type="nucleotide sequence ID" value="NC_011773.1"/>
</dbReference>
<dbReference type="SMR" id="B7JR67"/>
<dbReference type="GeneID" id="83638271"/>
<dbReference type="KEGG" id="bcu:BCAH820_4675"/>
<dbReference type="HOGENOM" id="CLU_025086_0_1_9"/>
<dbReference type="Proteomes" id="UP000001363">
    <property type="component" value="Chromosome"/>
</dbReference>
<dbReference type="GO" id="GO:0005737">
    <property type="term" value="C:cytoplasm"/>
    <property type="evidence" value="ECO:0007669"/>
    <property type="project" value="UniProtKB-SubCell"/>
</dbReference>
<dbReference type="GO" id="GO:0005524">
    <property type="term" value="F:ATP binding"/>
    <property type="evidence" value="ECO:0007669"/>
    <property type="project" value="UniProtKB-UniRule"/>
</dbReference>
<dbReference type="GO" id="GO:0140096">
    <property type="term" value="F:catalytic activity, acting on a protein"/>
    <property type="evidence" value="ECO:0007669"/>
    <property type="project" value="UniProtKB-ARBA"/>
</dbReference>
<dbReference type="GO" id="GO:0000287">
    <property type="term" value="F:magnesium ion binding"/>
    <property type="evidence" value="ECO:0007669"/>
    <property type="project" value="UniProtKB-UniRule"/>
</dbReference>
<dbReference type="GO" id="GO:0004826">
    <property type="term" value="F:phenylalanine-tRNA ligase activity"/>
    <property type="evidence" value="ECO:0007669"/>
    <property type="project" value="UniProtKB-UniRule"/>
</dbReference>
<dbReference type="GO" id="GO:0016740">
    <property type="term" value="F:transferase activity"/>
    <property type="evidence" value="ECO:0007669"/>
    <property type="project" value="UniProtKB-ARBA"/>
</dbReference>
<dbReference type="GO" id="GO:0000049">
    <property type="term" value="F:tRNA binding"/>
    <property type="evidence" value="ECO:0007669"/>
    <property type="project" value="InterPro"/>
</dbReference>
<dbReference type="GO" id="GO:0006432">
    <property type="term" value="P:phenylalanyl-tRNA aminoacylation"/>
    <property type="evidence" value="ECO:0007669"/>
    <property type="project" value="UniProtKB-UniRule"/>
</dbReference>
<dbReference type="CDD" id="cd00496">
    <property type="entry name" value="PheRS_alpha_core"/>
    <property type="match status" value="1"/>
</dbReference>
<dbReference type="FunFam" id="3.30.930.10:FF:000003">
    <property type="entry name" value="Phenylalanine--tRNA ligase alpha subunit"/>
    <property type="match status" value="1"/>
</dbReference>
<dbReference type="Gene3D" id="3.30.930.10">
    <property type="entry name" value="Bira Bifunctional Protein, Domain 2"/>
    <property type="match status" value="1"/>
</dbReference>
<dbReference type="HAMAP" id="MF_00281">
    <property type="entry name" value="Phe_tRNA_synth_alpha1"/>
    <property type="match status" value="1"/>
</dbReference>
<dbReference type="InterPro" id="IPR006195">
    <property type="entry name" value="aa-tRNA-synth_II"/>
</dbReference>
<dbReference type="InterPro" id="IPR045864">
    <property type="entry name" value="aa-tRNA-synth_II/BPL/LPL"/>
</dbReference>
<dbReference type="InterPro" id="IPR004529">
    <property type="entry name" value="Phe-tRNA-synth_IIc_asu"/>
</dbReference>
<dbReference type="InterPro" id="IPR004188">
    <property type="entry name" value="Phe-tRNA_ligase_II_N"/>
</dbReference>
<dbReference type="InterPro" id="IPR022911">
    <property type="entry name" value="Phe_tRNA_ligase_alpha1_bac"/>
</dbReference>
<dbReference type="InterPro" id="IPR002319">
    <property type="entry name" value="Phenylalanyl-tRNA_Synthase"/>
</dbReference>
<dbReference type="InterPro" id="IPR010978">
    <property type="entry name" value="tRNA-bd_arm"/>
</dbReference>
<dbReference type="NCBIfam" id="TIGR00468">
    <property type="entry name" value="pheS"/>
    <property type="match status" value="1"/>
</dbReference>
<dbReference type="PANTHER" id="PTHR11538:SF41">
    <property type="entry name" value="PHENYLALANINE--TRNA LIGASE, MITOCHONDRIAL"/>
    <property type="match status" value="1"/>
</dbReference>
<dbReference type="PANTHER" id="PTHR11538">
    <property type="entry name" value="PHENYLALANYL-TRNA SYNTHETASE"/>
    <property type="match status" value="1"/>
</dbReference>
<dbReference type="Pfam" id="PF02912">
    <property type="entry name" value="Phe_tRNA-synt_N"/>
    <property type="match status" value="1"/>
</dbReference>
<dbReference type="Pfam" id="PF01409">
    <property type="entry name" value="tRNA-synt_2d"/>
    <property type="match status" value="1"/>
</dbReference>
<dbReference type="SUPFAM" id="SSF55681">
    <property type="entry name" value="Class II aaRS and biotin synthetases"/>
    <property type="match status" value="1"/>
</dbReference>
<dbReference type="SUPFAM" id="SSF46589">
    <property type="entry name" value="tRNA-binding arm"/>
    <property type="match status" value="1"/>
</dbReference>
<dbReference type="PROSITE" id="PS50862">
    <property type="entry name" value="AA_TRNA_LIGASE_II"/>
    <property type="match status" value="1"/>
</dbReference>